<proteinExistence type="evidence at transcript level"/>
<name>B4GT2_CRIGR</name>
<reference key="1">
    <citation type="journal article" date="2003" name="Biochemistry">
        <title>A mutation causing a reduced level of expression of six beta4-galactosyltransferase genes is the basis of the Lec19 CHO glycosylation mutant.</title>
        <authorList>
            <person name="Lee J."/>
            <person name="Park S.-H."/>
            <person name="Sundaram S."/>
            <person name="Raju T.S."/>
            <person name="Shaper N.L."/>
            <person name="Stanley P."/>
        </authorList>
    </citation>
    <scope>NUCLEOTIDE SEQUENCE [MRNA]</scope>
    <source>
        <tissue>Ovary</tissue>
    </source>
</reference>
<accession>Q80WN9</accession>
<keyword id="KW-1015">Disulfide bond</keyword>
<keyword id="KW-0325">Glycoprotein</keyword>
<keyword id="KW-0328">Glycosyltransferase</keyword>
<keyword id="KW-0333">Golgi apparatus</keyword>
<keyword id="KW-0464">Manganese</keyword>
<keyword id="KW-0472">Membrane</keyword>
<keyword id="KW-0479">Metal-binding</keyword>
<keyword id="KW-0735">Signal-anchor</keyword>
<keyword id="KW-0808">Transferase</keyword>
<keyword id="KW-0812">Transmembrane</keyword>
<keyword id="KW-1133">Transmembrane helix</keyword>
<organism>
    <name type="scientific">Cricetulus griseus</name>
    <name type="common">Chinese hamster</name>
    <name type="synonym">Cricetulus barabensis griseus</name>
    <dbReference type="NCBI Taxonomy" id="10029"/>
    <lineage>
        <taxon>Eukaryota</taxon>
        <taxon>Metazoa</taxon>
        <taxon>Chordata</taxon>
        <taxon>Craniata</taxon>
        <taxon>Vertebrata</taxon>
        <taxon>Euteleostomi</taxon>
        <taxon>Mammalia</taxon>
        <taxon>Eutheria</taxon>
        <taxon>Euarchontoglires</taxon>
        <taxon>Glires</taxon>
        <taxon>Rodentia</taxon>
        <taxon>Myomorpha</taxon>
        <taxon>Muroidea</taxon>
        <taxon>Cricetidae</taxon>
        <taxon>Cricetinae</taxon>
        <taxon>Cricetulus</taxon>
    </lineage>
</organism>
<feature type="chain" id="PRO_0000080532" description="Beta-1,4-galactosyltransferase 2">
    <location>
        <begin position="1"/>
        <end position="369"/>
    </location>
</feature>
<feature type="topological domain" description="Cytoplasmic" evidence="3">
    <location>
        <begin position="1"/>
        <end position="15"/>
    </location>
</feature>
<feature type="transmembrane region" description="Helical; Signal-anchor for type II membrane protein" evidence="3">
    <location>
        <begin position="16"/>
        <end position="36"/>
    </location>
</feature>
<feature type="topological domain" description="Lumenal" evidence="3">
    <location>
        <begin position="37"/>
        <end position="369"/>
    </location>
</feature>
<feature type="region of interest" description="Disordered" evidence="4">
    <location>
        <begin position="59"/>
        <end position="90"/>
    </location>
</feature>
<feature type="compositionally biased region" description="Polar residues" evidence="4">
    <location>
        <begin position="59"/>
        <end position="75"/>
    </location>
</feature>
<feature type="binding site" evidence="1">
    <location>
        <begin position="147"/>
        <end position="151"/>
    </location>
    <ligand>
        <name>UDP-alpha-D-galactose</name>
        <dbReference type="ChEBI" id="CHEBI:66914"/>
    </ligand>
</feature>
<feature type="binding site" evidence="1">
    <location>
        <begin position="186"/>
        <end position="188"/>
    </location>
    <ligand>
        <name>UDP-alpha-D-galactose</name>
        <dbReference type="ChEBI" id="CHEBI:66914"/>
    </ligand>
</feature>
<feature type="binding site" evidence="1">
    <location>
        <begin position="214"/>
        <end position="215"/>
    </location>
    <ligand>
        <name>UDP-alpha-D-galactose</name>
        <dbReference type="ChEBI" id="CHEBI:66914"/>
    </ligand>
</feature>
<feature type="binding site" evidence="1">
    <location>
        <position position="215"/>
    </location>
    <ligand>
        <name>Mn(2+)</name>
        <dbReference type="ChEBI" id="CHEBI:29035"/>
    </ligand>
</feature>
<feature type="binding site" evidence="1">
    <location>
        <position position="275"/>
    </location>
    <ligand>
        <name>UDP-alpha-D-galactose</name>
        <dbReference type="ChEBI" id="CHEBI:66914"/>
    </ligand>
</feature>
<feature type="binding site" evidence="1">
    <location>
        <begin position="277"/>
        <end position="280"/>
    </location>
    <ligand>
        <name>N-acetyl-D-glucosamine</name>
        <dbReference type="ChEBI" id="CHEBI:506227"/>
    </ligand>
</feature>
<feature type="binding site" evidence="1">
    <location>
        <begin position="308"/>
        <end position="310"/>
    </location>
    <ligand>
        <name>UDP-alpha-D-galactose</name>
        <dbReference type="ChEBI" id="CHEBI:66914"/>
    </ligand>
</feature>
<feature type="binding site" evidence="1">
    <location>
        <position position="308"/>
    </location>
    <ligand>
        <name>Mn(2+)</name>
        <dbReference type="ChEBI" id="CHEBI:29035"/>
    </ligand>
</feature>
<feature type="binding site" evidence="1">
    <location>
        <position position="320"/>
    </location>
    <ligand>
        <name>N-acetyl-D-glucosamine</name>
        <dbReference type="ChEBI" id="CHEBI:506227"/>
    </ligand>
</feature>
<feature type="glycosylation site" description="N-linked (GlcNAc...) asparagine" evidence="3">
    <location>
        <position position="63"/>
    </location>
</feature>
<feature type="glycosylation site" description="N-linked (GlcNAc...) asparagine" evidence="3">
    <location>
        <position position="68"/>
    </location>
</feature>
<feature type="glycosylation site" description="N-linked (GlcNAc...) asparagine" evidence="3">
    <location>
        <position position="354"/>
    </location>
</feature>
<feature type="disulfide bond" evidence="1">
    <location>
        <begin position="94"/>
        <end position="136"/>
    </location>
</feature>
<feature type="disulfide bond" evidence="1">
    <location>
        <begin position="208"/>
        <end position="227"/>
    </location>
</feature>
<protein>
    <recommendedName>
        <fullName>Beta-1,4-galactosyltransferase 2</fullName>
        <shortName>Beta-1,4-GalTase 2</shortName>
        <shortName>Beta4Gal-T2</shortName>
        <shortName>b4Gal-T2</shortName>
        <ecNumber evidence="2">2.4.1.-</ecNumber>
    </recommendedName>
    <alternativeName>
        <fullName>Beta-N-acetylglucosaminyl-glycolipid beta-1,4-galactosyltransferase</fullName>
    </alternativeName>
    <alternativeName>
        <fullName>Beta-N-acetylglucosaminylglycopeptide beta-1,4-galactosyltransferase</fullName>
        <ecNumber evidence="2">2.4.1.38</ecNumber>
    </alternativeName>
    <alternativeName>
        <fullName>Lactose synthase A protein</fullName>
        <ecNumber evidence="2">2.4.1.22</ecNumber>
    </alternativeName>
    <alternativeName>
        <fullName>N-acetyllactosamine synthase</fullName>
        <ecNumber evidence="2">2.4.1.90</ecNumber>
    </alternativeName>
    <alternativeName>
        <fullName>Nal synthase</fullName>
    </alternativeName>
    <alternativeName>
        <fullName>UDP-Gal:beta-GlcNAc beta-1,4-galactosyltransferase 2</fullName>
    </alternativeName>
    <alternativeName>
        <fullName>UDP-galactose:beta-N-acetylglucosamine beta-1,4-galactosyltransferase 2</fullName>
    </alternativeName>
</protein>
<evidence type="ECO:0000250" key="1"/>
<evidence type="ECO:0000250" key="2">
    <source>
        <dbReference type="UniProtKB" id="O60909"/>
    </source>
</evidence>
<evidence type="ECO:0000255" key="3"/>
<evidence type="ECO:0000256" key="4">
    <source>
        <dbReference type="SAM" id="MobiDB-lite"/>
    </source>
</evidence>
<evidence type="ECO:0000305" key="5"/>
<gene>
    <name type="primary">B4GALT2</name>
</gene>
<comment type="function">
    <text evidence="2">Responsible for the synthesis of complex-type N-linked oligosaccharides in many glycoproteins as well as the carbohydrate moieties of glycolipids. Can produce lactose (By similarity).</text>
</comment>
<comment type="catalytic activity">
    <reaction evidence="2">
        <text>D-glucose + UDP-alpha-D-galactose = lactose + UDP + H(+)</text>
        <dbReference type="Rhea" id="RHEA:12404"/>
        <dbReference type="ChEBI" id="CHEBI:4167"/>
        <dbReference type="ChEBI" id="CHEBI:15378"/>
        <dbReference type="ChEBI" id="CHEBI:17716"/>
        <dbReference type="ChEBI" id="CHEBI:58223"/>
        <dbReference type="ChEBI" id="CHEBI:66914"/>
        <dbReference type="EC" id="2.4.1.22"/>
    </reaction>
    <physiologicalReaction direction="left-to-right" evidence="2">
        <dbReference type="Rhea" id="RHEA:12405"/>
    </physiologicalReaction>
</comment>
<comment type="catalytic activity">
    <reaction evidence="2">
        <text>an N-acetyl-beta-D-glucosaminyl derivative + UDP-alpha-D-galactose = a beta-D-galactosyl-(1-&gt;4)-N-acetyl-beta-D-glucosaminyl derivative + UDP + H(+)</text>
        <dbReference type="Rhea" id="RHEA:22932"/>
        <dbReference type="ChEBI" id="CHEBI:15378"/>
        <dbReference type="ChEBI" id="CHEBI:58223"/>
        <dbReference type="ChEBI" id="CHEBI:61631"/>
        <dbReference type="ChEBI" id="CHEBI:66914"/>
        <dbReference type="ChEBI" id="CHEBI:133507"/>
        <dbReference type="EC" id="2.4.1.38"/>
    </reaction>
    <physiologicalReaction direction="left-to-right" evidence="2">
        <dbReference type="Rhea" id="RHEA:22933"/>
    </physiologicalReaction>
</comment>
<comment type="catalytic activity">
    <reaction evidence="2">
        <text>N-acetyl-D-glucosamine + UDP-alpha-D-galactose = beta-D-galactosyl-(1-&gt;4)-N-acetyl-D-glucosamine + UDP + H(+)</text>
        <dbReference type="Rhea" id="RHEA:17745"/>
        <dbReference type="ChEBI" id="CHEBI:15378"/>
        <dbReference type="ChEBI" id="CHEBI:58223"/>
        <dbReference type="ChEBI" id="CHEBI:60152"/>
        <dbReference type="ChEBI" id="CHEBI:66914"/>
        <dbReference type="ChEBI" id="CHEBI:506227"/>
        <dbReference type="EC" id="2.4.1.90"/>
    </reaction>
    <physiologicalReaction direction="left-to-right" evidence="2">
        <dbReference type="Rhea" id="RHEA:17746"/>
    </physiologicalReaction>
</comment>
<comment type="cofactor">
    <cofactor evidence="1">
        <name>Mn(2+)</name>
        <dbReference type="ChEBI" id="CHEBI:29035"/>
    </cofactor>
</comment>
<comment type="pathway">
    <text>Protein modification; protein glycosylation.</text>
</comment>
<comment type="subcellular location">
    <subcellularLocation>
        <location evidence="1">Golgi apparatus</location>
        <location evidence="1">Golgi stack membrane</location>
        <topology evidence="1">Single-pass type II membrane protein</topology>
    </subcellularLocation>
    <text evidence="1">Trans cisternae of Golgi stack.</text>
</comment>
<comment type="similarity">
    <text evidence="5">Belongs to the glycosyltransferase 7 family.</text>
</comment>
<dbReference type="EC" id="2.4.1.-" evidence="2"/>
<dbReference type="EC" id="2.4.1.38" evidence="2"/>
<dbReference type="EC" id="2.4.1.22" evidence="2"/>
<dbReference type="EC" id="2.4.1.90" evidence="2"/>
<dbReference type="EMBL" id="AY117536">
    <property type="protein sequence ID" value="AAM77195.1"/>
    <property type="molecule type" value="mRNA"/>
</dbReference>
<dbReference type="RefSeq" id="NP_001233623.1">
    <property type="nucleotide sequence ID" value="NM_001246694.2"/>
</dbReference>
<dbReference type="RefSeq" id="XP_007641467.1">
    <property type="nucleotide sequence ID" value="XM_007643277.2"/>
</dbReference>
<dbReference type="SMR" id="Q80WN9"/>
<dbReference type="CAZy" id="GT7">
    <property type="family name" value="Glycosyltransferase Family 7"/>
</dbReference>
<dbReference type="GlyCosmos" id="Q80WN9">
    <property type="glycosylation" value="3 sites, No reported glycans"/>
</dbReference>
<dbReference type="PaxDb" id="10029-NP_001233623.1"/>
<dbReference type="Ensembl" id="ENSCGRT00001017640.1">
    <property type="protein sequence ID" value="ENSCGRP00001013403.1"/>
    <property type="gene ID" value="ENSCGRG00001014544.1"/>
</dbReference>
<dbReference type="GeneID" id="100689434"/>
<dbReference type="KEGG" id="cge:100689434"/>
<dbReference type="CTD" id="8704"/>
<dbReference type="eggNOG" id="KOG3916">
    <property type="taxonomic scope" value="Eukaryota"/>
</dbReference>
<dbReference type="GeneTree" id="ENSGT00940000159367"/>
<dbReference type="OMA" id="GEQPRHF"/>
<dbReference type="OrthoDB" id="10016069at2759"/>
<dbReference type="UniPathway" id="UPA00378"/>
<dbReference type="Proteomes" id="UP000694386">
    <property type="component" value="Unplaced"/>
</dbReference>
<dbReference type="Proteomes" id="UP001108280">
    <property type="component" value="Chromosome 2"/>
</dbReference>
<dbReference type="GO" id="GO:0032580">
    <property type="term" value="C:Golgi cisterna membrane"/>
    <property type="evidence" value="ECO:0007669"/>
    <property type="project" value="UniProtKB-SubCell"/>
</dbReference>
<dbReference type="GO" id="GO:0005654">
    <property type="term" value="C:nucleoplasm"/>
    <property type="evidence" value="ECO:0007669"/>
    <property type="project" value="Ensembl"/>
</dbReference>
<dbReference type="GO" id="GO:0003831">
    <property type="term" value="F:beta-N-acetylglucosaminylglycopeptide beta-1,4-galactosyltransferase activity"/>
    <property type="evidence" value="ECO:0007669"/>
    <property type="project" value="UniProtKB-EC"/>
</dbReference>
<dbReference type="GO" id="GO:0004461">
    <property type="term" value="F:lactose synthase activity"/>
    <property type="evidence" value="ECO:0007669"/>
    <property type="project" value="UniProtKB-EC"/>
</dbReference>
<dbReference type="GO" id="GO:0046872">
    <property type="term" value="F:metal ion binding"/>
    <property type="evidence" value="ECO:0007669"/>
    <property type="project" value="UniProtKB-KW"/>
</dbReference>
<dbReference type="GO" id="GO:0003945">
    <property type="term" value="F:N-acetyllactosamine synthase activity"/>
    <property type="evidence" value="ECO:0007669"/>
    <property type="project" value="UniProtKB-EC"/>
</dbReference>
<dbReference type="GO" id="GO:0005975">
    <property type="term" value="P:carbohydrate metabolic process"/>
    <property type="evidence" value="ECO:0007669"/>
    <property type="project" value="InterPro"/>
</dbReference>
<dbReference type="GO" id="GO:0021680">
    <property type="term" value="P:cerebellar Purkinje cell layer development"/>
    <property type="evidence" value="ECO:0007669"/>
    <property type="project" value="Ensembl"/>
</dbReference>
<dbReference type="GO" id="GO:0007626">
    <property type="term" value="P:locomotory behavior"/>
    <property type="evidence" value="ECO:0007669"/>
    <property type="project" value="Ensembl"/>
</dbReference>
<dbReference type="GO" id="GO:0007613">
    <property type="term" value="P:memory"/>
    <property type="evidence" value="ECO:0007669"/>
    <property type="project" value="Ensembl"/>
</dbReference>
<dbReference type="GO" id="GO:0006486">
    <property type="term" value="P:protein glycosylation"/>
    <property type="evidence" value="ECO:0007669"/>
    <property type="project" value="UniProtKB-UniPathway"/>
</dbReference>
<dbReference type="GO" id="GO:0008542">
    <property type="term" value="P:visual learning"/>
    <property type="evidence" value="ECO:0007669"/>
    <property type="project" value="Ensembl"/>
</dbReference>
<dbReference type="CDD" id="cd00899">
    <property type="entry name" value="b4GalT"/>
    <property type="match status" value="1"/>
</dbReference>
<dbReference type="FunFam" id="3.90.550.10:FF:000028">
    <property type="entry name" value="beta-1,4-galactosyltransferase 1"/>
    <property type="match status" value="1"/>
</dbReference>
<dbReference type="Gene3D" id="3.90.550.10">
    <property type="entry name" value="Spore Coat Polysaccharide Biosynthesis Protein SpsA, Chain A"/>
    <property type="match status" value="1"/>
</dbReference>
<dbReference type="InterPro" id="IPR003859">
    <property type="entry name" value="Galactosyl_T"/>
</dbReference>
<dbReference type="InterPro" id="IPR027791">
    <property type="entry name" value="Galactosyl_T_C"/>
</dbReference>
<dbReference type="InterPro" id="IPR027995">
    <property type="entry name" value="Galactosyl_T_N"/>
</dbReference>
<dbReference type="InterPro" id="IPR029044">
    <property type="entry name" value="Nucleotide-diphossugar_trans"/>
</dbReference>
<dbReference type="PANTHER" id="PTHR19300">
    <property type="entry name" value="BETA-1,4-GALACTOSYLTRANSFERASE"/>
    <property type="match status" value="1"/>
</dbReference>
<dbReference type="PANTHER" id="PTHR19300:SF32">
    <property type="entry name" value="BETA-1,4-GALACTOSYLTRANSFERASE 2"/>
    <property type="match status" value="1"/>
</dbReference>
<dbReference type="Pfam" id="PF02709">
    <property type="entry name" value="Glyco_transf_7C"/>
    <property type="match status" value="1"/>
</dbReference>
<dbReference type="Pfam" id="PF13733">
    <property type="entry name" value="Glyco_transf_7N"/>
    <property type="match status" value="1"/>
</dbReference>
<dbReference type="PRINTS" id="PR02050">
    <property type="entry name" value="B14GALTRFASE"/>
</dbReference>
<dbReference type="SUPFAM" id="SSF53448">
    <property type="entry name" value="Nucleotide-diphospho-sugar transferases"/>
    <property type="match status" value="1"/>
</dbReference>
<sequence>MSRLLGGTLERVCKAVLLLCLLHFLVAVILYFDVYAQHLAFFSRFSIRSPAHALYPAASSSTNCSRPNATASSSGLPEVPSARPGPTAPVIPPCPDVPPGLVGRVVIEFTSPMPLERVQRENPGVLLGGRYTPPDCTPAQTVAVIIPFRHREHHLRYWLHYLHPMLRRQRLRYGIYVINQHGEETFNRAKLLNVGFLEALKEDATYDCFIFSDVDLVPMDDRNLYRCGDQPRHFAIAMDKFGFRLPYASYFGGVSGLSKAQFLRINGFPNEYWGWGGEDDDIFNRISLTGMKISRPDVRIGRYRMIKHDRDKHNEPNPQRFSKIQNTKLSMKWDGIGSLRYRVLEVSRQPLFTNITVDIGRPMSWLNQG</sequence>